<accession>B7UHK9</accession>
<protein>
    <recommendedName>
        <fullName evidence="1">Protein Syd</fullName>
    </recommendedName>
</protein>
<dbReference type="EMBL" id="FM180568">
    <property type="protein sequence ID" value="CAS10608.1"/>
    <property type="molecule type" value="Genomic_DNA"/>
</dbReference>
<dbReference type="RefSeq" id="WP_000342431.1">
    <property type="nucleotide sequence ID" value="NC_011601.1"/>
</dbReference>
<dbReference type="SMR" id="B7UHK9"/>
<dbReference type="GeneID" id="93779205"/>
<dbReference type="KEGG" id="ecg:E2348C_3060"/>
<dbReference type="HOGENOM" id="CLU_121866_0_0_6"/>
<dbReference type="Proteomes" id="UP000008205">
    <property type="component" value="Chromosome"/>
</dbReference>
<dbReference type="GO" id="GO:0009898">
    <property type="term" value="C:cytoplasmic side of plasma membrane"/>
    <property type="evidence" value="ECO:0007669"/>
    <property type="project" value="InterPro"/>
</dbReference>
<dbReference type="CDD" id="cd16323">
    <property type="entry name" value="Syd"/>
    <property type="match status" value="1"/>
</dbReference>
<dbReference type="FunFam" id="3.40.1580.20:FF:000001">
    <property type="entry name" value="Protein Syd"/>
    <property type="match status" value="1"/>
</dbReference>
<dbReference type="Gene3D" id="3.40.1580.20">
    <property type="entry name" value="Syd protein"/>
    <property type="match status" value="1"/>
</dbReference>
<dbReference type="HAMAP" id="MF_01104">
    <property type="entry name" value="Syd"/>
    <property type="match status" value="1"/>
</dbReference>
<dbReference type="InterPro" id="IPR009948">
    <property type="entry name" value="Syd"/>
</dbReference>
<dbReference type="InterPro" id="IPR038228">
    <property type="entry name" value="Syd_sf"/>
</dbReference>
<dbReference type="NCBIfam" id="NF003439">
    <property type="entry name" value="PRK04968.1"/>
    <property type="match status" value="1"/>
</dbReference>
<dbReference type="Pfam" id="PF07348">
    <property type="entry name" value="Syd"/>
    <property type="match status" value="1"/>
</dbReference>
<evidence type="ECO:0000255" key="1">
    <source>
        <dbReference type="HAMAP-Rule" id="MF_01104"/>
    </source>
</evidence>
<comment type="function">
    <text evidence="1">Interacts with the SecY protein in vivo. May bind preferentially to an uncomplexed state of SecY, thus functioning either as a chelating agent for excess SecY in the cell or as a regulatory factor that negatively controls the translocase function.</text>
</comment>
<comment type="subcellular location">
    <subcellularLocation>
        <location evidence="1">Cell inner membrane</location>
        <topology evidence="1">Peripheral membrane protein</topology>
        <orientation evidence="1">Cytoplasmic side</orientation>
    </subcellularLocation>
    <text evidence="1">Loosely associated with the cytoplasmic side of the inner membrane, probably via SecY.</text>
</comment>
<comment type="similarity">
    <text evidence="1">Belongs to the Syd family.</text>
</comment>
<sequence>MDDLTAQALKDFTARYCDAWHEEHKSWPLSEELYGVPSPCIISTTEDAVYWQPQPFTGEQNVNAVERAFDIVIQPTIHTFYTTQFAGDMHAQFGDIKLTLLQTWSEDDFRRVQENLIGHLVTQKRLKLPPTLFIATLEEELEVISVCNLSGEVCKETLGTRKRTHLASNLAEFLNQLKPLL</sequence>
<reference key="1">
    <citation type="journal article" date="2009" name="J. Bacteriol.">
        <title>Complete genome sequence and comparative genome analysis of enteropathogenic Escherichia coli O127:H6 strain E2348/69.</title>
        <authorList>
            <person name="Iguchi A."/>
            <person name="Thomson N.R."/>
            <person name="Ogura Y."/>
            <person name="Saunders D."/>
            <person name="Ooka T."/>
            <person name="Henderson I.R."/>
            <person name="Harris D."/>
            <person name="Asadulghani M."/>
            <person name="Kurokawa K."/>
            <person name="Dean P."/>
            <person name="Kenny B."/>
            <person name="Quail M.A."/>
            <person name="Thurston S."/>
            <person name="Dougan G."/>
            <person name="Hayashi T."/>
            <person name="Parkhill J."/>
            <person name="Frankel G."/>
        </authorList>
    </citation>
    <scope>NUCLEOTIDE SEQUENCE [LARGE SCALE GENOMIC DNA]</scope>
    <source>
        <strain>E2348/69 / EPEC</strain>
    </source>
</reference>
<name>SYDP_ECO27</name>
<proteinExistence type="inferred from homology"/>
<organism>
    <name type="scientific">Escherichia coli O127:H6 (strain E2348/69 / EPEC)</name>
    <dbReference type="NCBI Taxonomy" id="574521"/>
    <lineage>
        <taxon>Bacteria</taxon>
        <taxon>Pseudomonadati</taxon>
        <taxon>Pseudomonadota</taxon>
        <taxon>Gammaproteobacteria</taxon>
        <taxon>Enterobacterales</taxon>
        <taxon>Enterobacteriaceae</taxon>
        <taxon>Escherichia</taxon>
    </lineage>
</organism>
<gene>
    <name evidence="1" type="primary">syd</name>
    <name type="ordered locus">E2348C_3060</name>
</gene>
<keyword id="KW-0997">Cell inner membrane</keyword>
<keyword id="KW-1003">Cell membrane</keyword>
<keyword id="KW-0472">Membrane</keyword>
<keyword id="KW-1185">Reference proteome</keyword>
<feature type="chain" id="PRO_1000163944" description="Protein Syd">
    <location>
        <begin position="1"/>
        <end position="181"/>
    </location>
</feature>